<organism>
    <name type="scientific">Pseudomonas aeruginosa (strain ATCC 15692 / DSM 22644 / CIP 104116 / JCM 14847 / LMG 12228 / 1C / PRS 101 / PAO1)</name>
    <dbReference type="NCBI Taxonomy" id="208964"/>
    <lineage>
        <taxon>Bacteria</taxon>
        <taxon>Pseudomonadati</taxon>
        <taxon>Pseudomonadota</taxon>
        <taxon>Gammaproteobacteria</taxon>
        <taxon>Pseudomonadales</taxon>
        <taxon>Pseudomonadaceae</taxon>
        <taxon>Pseudomonas</taxon>
    </lineage>
</organism>
<proteinExistence type="inferred from homology"/>
<reference key="1">
    <citation type="journal article" date="1990" name="J. Bacteriol.">
        <title>Cloning, nucleotide sequences, and identification of products of the Pseudomonas aeruginosa PAO bra genes, which encode the high-affinity branched-chain amino acid transport system.</title>
        <authorList>
            <person name="Hoshino T."/>
            <person name="Kose K."/>
        </authorList>
    </citation>
    <scope>NUCLEOTIDE SEQUENCE [GENOMIC DNA]</scope>
    <source>
        <strain>PAO</strain>
    </source>
</reference>
<reference key="2">
    <citation type="journal article" date="2000" name="Nature">
        <title>Complete genome sequence of Pseudomonas aeruginosa PAO1, an opportunistic pathogen.</title>
        <authorList>
            <person name="Stover C.K."/>
            <person name="Pham X.-Q.T."/>
            <person name="Erwin A.L."/>
            <person name="Mizoguchi S.D."/>
            <person name="Warrener P."/>
            <person name="Hickey M.J."/>
            <person name="Brinkman F.S.L."/>
            <person name="Hufnagle W.O."/>
            <person name="Kowalik D.J."/>
            <person name="Lagrou M."/>
            <person name="Garber R.L."/>
            <person name="Goltry L."/>
            <person name="Tolentino E."/>
            <person name="Westbrock-Wadman S."/>
            <person name="Yuan Y."/>
            <person name="Brody L.L."/>
            <person name="Coulter S.N."/>
            <person name="Folger K.R."/>
            <person name="Kas A."/>
            <person name="Larbig K."/>
            <person name="Lim R.M."/>
            <person name="Smith K.A."/>
            <person name="Spencer D.H."/>
            <person name="Wong G.K.-S."/>
            <person name="Wu Z."/>
            <person name="Paulsen I.T."/>
            <person name="Reizer J."/>
            <person name="Saier M.H. Jr."/>
            <person name="Hancock R.E.W."/>
            <person name="Lory S."/>
            <person name="Olson M.V."/>
        </authorList>
    </citation>
    <scope>NUCLEOTIDE SEQUENCE [LARGE SCALE GENOMIC DNA]</scope>
    <source>
        <strain>ATCC 15692 / DSM 22644 / CIP 104116 / JCM 14847 / LMG 12228 / 1C / PRS 101 / PAO1</strain>
    </source>
</reference>
<reference key="3">
    <citation type="journal article" date="1989" name="J. Bacteriol.">
        <title>Cloning and nucleotide sequence of braC, the structural gene for the leucine-, isoleucine-, and valine-binding protein of Pseudomonas aeruginosa PAO.</title>
        <authorList>
            <person name="Hoshino T."/>
            <person name="Kose K."/>
        </authorList>
    </citation>
    <scope>NUCLEOTIDE SEQUENCE [GENOMIC DNA] OF 1-13</scope>
    <source>
        <strain>PAO</strain>
    </source>
</reference>
<name>BRAD_PSEAE</name>
<accession>P21627</accession>
<accession>Q6LDM2</accession>
<dbReference type="EMBL" id="D90223">
    <property type="protein sequence ID" value="BAA14255.1"/>
    <property type="molecule type" value="Genomic_DNA"/>
</dbReference>
<dbReference type="EMBL" id="AE004091">
    <property type="protein sequence ID" value="AAG04462.1"/>
    <property type="molecule type" value="Genomic_DNA"/>
</dbReference>
<dbReference type="EMBL" id="M31071">
    <property type="protein sequence ID" value="AAA88431.1"/>
    <property type="molecule type" value="Genomic_DNA"/>
</dbReference>
<dbReference type="PIR" id="B36125">
    <property type="entry name" value="B36125"/>
</dbReference>
<dbReference type="RefSeq" id="NP_249764.1">
    <property type="nucleotide sequence ID" value="NC_002516.2"/>
</dbReference>
<dbReference type="FunCoup" id="P21627">
    <property type="interactions" value="365"/>
</dbReference>
<dbReference type="STRING" id="208964.PA1073"/>
<dbReference type="TCDB" id="3.A.1.4.8">
    <property type="family name" value="the atp-binding cassette (abc) superfamily"/>
</dbReference>
<dbReference type="PaxDb" id="208964-PA1073"/>
<dbReference type="DNASU" id="881243"/>
<dbReference type="GeneID" id="881243"/>
<dbReference type="KEGG" id="pae:PA1073"/>
<dbReference type="PATRIC" id="fig|208964.12.peg.1111"/>
<dbReference type="PseudoCAP" id="PA1073"/>
<dbReference type="HOGENOM" id="CLU_039929_3_0_6"/>
<dbReference type="InParanoid" id="P21627"/>
<dbReference type="OrthoDB" id="9807115at2"/>
<dbReference type="PhylomeDB" id="P21627"/>
<dbReference type="BioCyc" id="PAER208964:G1FZ6-1096-MONOMER"/>
<dbReference type="Proteomes" id="UP000002438">
    <property type="component" value="Chromosome"/>
</dbReference>
<dbReference type="GO" id="GO:0005886">
    <property type="term" value="C:plasma membrane"/>
    <property type="evidence" value="ECO:0000318"/>
    <property type="project" value="GO_Central"/>
</dbReference>
<dbReference type="GO" id="GO:0015188">
    <property type="term" value="F:L-isoleucine transmembrane transporter activity"/>
    <property type="evidence" value="ECO:0000318"/>
    <property type="project" value="GO_Central"/>
</dbReference>
<dbReference type="GO" id="GO:0015190">
    <property type="term" value="F:L-leucine transmembrane transporter activity"/>
    <property type="evidence" value="ECO:0000318"/>
    <property type="project" value="GO_Central"/>
</dbReference>
<dbReference type="GO" id="GO:0015192">
    <property type="term" value="F:L-phenylalanine transmembrane transporter activity"/>
    <property type="evidence" value="ECO:0000318"/>
    <property type="project" value="GO_Central"/>
</dbReference>
<dbReference type="GO" id="GO:0005304">
    <property type="term" value="F:L-valine transmembrane transporter activity"/>
    <property type="evidence" value="ECO:0000318"/>
    <property type="project" value="GO_Central"/>
</dbReference>
<dbReference type="GO" id="GO:0042941">
    <property type="term" value="P:D-alanine transmembrane transport"/>
    <property type="evidence" value="ECO:0000315"/>
    <property type="project" value="PseudoCAP"/>
</dbReference>
<dbReference type="GO" id="GO:0015808">
    <property type="term" value="P:L-alanine transport"/>
    <property type="evidence" value="ECO:0000315"/>
    <property type="project" value="PseudoCAP"/>
</dbReference>
<dbReference type="GO" id="GO:1903806">
    <property type="term" value="P:L-isoleucine import across plasma membrane"/>
    <property type="evidence" value="ECO:0000315"/>
    <property type="project" value="PseudoCAP"/>
</dbReference>
<dbReference type="GO" id="GO:1903801">
    <property type="term" value="P:L-leucine import across plasma membrane"/>
    <property type="evidence" value="ECO:0000318"/>
    <property type="project" value="GO_Central"/>
</dbReference>
<dbReference type="GO" id="GO:1903785">
    <property type="term" value="P:L-valine transmembrane transport"/>
    <property type="evidence" value="ECO:0000318"/>
    <property type="project" value="GO_Central"/>
</dbReference>
<dbReference type="GO" id="GO:0015823">
    <property type="term" value="P:phenylalanine transport"/>
    <property type="evidence" value="ECO:0000318"/>
    <property type="project" value="GO_Central"/>
</dbReference>
<dbReference type="CDD" id="cd06582">
    <property type="entry name" value="TM_PBP1_LivH_like"/>
    <property type="match status" value="1"/>
</dbReference>
<dbReference type="InterPro" id="IPR001851">
    <property type="entry name" value="ABC_transp_permease"/>
</dbReference>
<dbReference type="InterPro" id="IPR052157">
    <property type="entry name" value="BCAA_transport_permease"/>
</dbReference>
<dbReference type="NCBIfam" id="NF008011">
    <property type="entry name" value="PRK10740.1"/>
    <property type="match status" value="1"/>
</dbReference>
<dbReference type="PANTHER" id="PTHR11795">
    <property type="entry name" value="BRANCHED-CHAIN AMINO ACID TRANSPORT SYSTEM PERMEASE PROTEIN LIVH"/>
    <property type="match status" value="1"/>
</dbReference>
<dbReference type="PANTHER" id="PTHR11795:SF371">
    <property type="entry name" value="HIGH-AFFINITY BRANCHED-CHAIN AMINO ACID TRANSPORT SYSTEM PERMEASE PROTEIN LIVH"/>
    <property type="match status" value="1"/>
</dbReference>
<dbReference type="Pfam" id="PF02653">
    <property type="entry name" value="BPD_transp_2"/>
    <property type="match status" value="1"/>
</dbReference>
<comment type="function">
    <text>Component of the high affinity leucine, isoleucine, valine, transport system (LIV-I), which is operative without Na(+) and is specific for alanine and threonine, in addition to branched-chain amino acids.</text>
</comment>
<comment type="subcellular location">
    <subcellularLocation>
        <location>Cell inner membrane</location>
        <topology>Multi-pass membrane protein</topology>
    </subcellularLocation>
</comment>
<comment type="similarity">
    <text evidence="2">Belongs to the binding-protein-dependent transport system permease family. LivHM subfamily.</text>
</comment>
<protein>
    <recommendedName>
        <fullName>High-affinity branched-chain amino acid transport system permease protein BraD</fullName>
    </recommendedName>
</protein>
<sequence length="307" mass="32514">MPEIYHYLQQLVNGLTVGSTYALIAIGYTMVYGIIGMINFAHGEVYMIGSYIAFIAITLLAMMGLDSVPLMMLAAFAASIIVTSAFGYSIERVAYRPLRGGNRLIPLISAIGMSIFLQNAVMLSQDSKEKAIPTLLPGNFVFGESSMNGVVISYMQILIFVVTFLVMFGLTLFISRSRLGRACRACAEDLKMTNLLGINSNNIIALTFVIGAALAAVAAVLLGMQYGVINPGIGFLAGIKAFTAAVLGGIGSIPGAMLGGLLLGVAEAFGADVFGDQYKDVVAFGLLILVLLFRPTGILGRPEVEKV</sequence>
<evidence type="ECO:0000255" key="1"/>
<evidence type="ECO:0000305" key="2"/>
<keyword id="KW-0029">Amino-acid transport</keyword>
<keyword id="KW-0997">Cell inner membrane</keyword>
<keyword id="KW-1003">Cell membrane</keyword>
<keyword id="KW-0472">Membrane</keyword>
<keyword id="KW-1185">Reference proteome</keyword>
<keyword id="KW-0812">Transmembrane</keyword>
<keyword id="KW-1133">Transmembrane helix</keyword>
<keyword id="KW-0813">Transport</keyword>
<feature type="chain" id="PRO_0000059966" description="High-affinity branched-chain amino acid transport system permease protein BraD">
    <location>
        <begin position="1"/>
        <end position="307"/>
    </location>
</feature>
<feature type="transmembrane region" description="Helical" evidence="1">
    <location>
        <begin position="21"/>
        <end position="41"/>
    </location>
</feature>
<feature type="transmembrane region" description="Helical" evidence="1">
    <location>
        <begin position="45"/>
        <end position="65"/>
    </location>
</feature>
<feature type="transmembrane region" description="Helical" evidence="1">
    <location>
        <begin position="70"/>
        <end position="90"/>
    </location>
</feature>
<feature type="transmembrane region" description="Helical" evidence="1">
    <location>
        <begin position="104"/>
        <end position="124"/>
    </location>
</feature>
<feature type="transmembrane region" description="Helical" evidence="1">
    <location>
        <begin position="132"/>
        <end position="152"/>
    </location>
</feature>
<feature type="transmembrane region" description="Helical" evidence="1">
    <location>
        <begin position="154"/>
        <end position="174"/>
    </location>
</feature>
<feature type="transmembrane region" description="Helical" evidence="1">
    <location>
        <begin position="203"/>
        <end position="223"/>
    </location>
</feature>
<feature type="transmembrane region" description="Helical" evidence="1">
    <location>
        <begin position="224"/>
        <end position="244"/>
    </location>
</feature>
<feature type="transmembrane region" description="Helical" evidence="1">
    <location>
        <begin position="245"/>
        <end position="265"/>
    </location>
</feature>
<feature type="transmembrane region" description="Helical" evidence="1">
    <location>
        <begin position="280"/>
        <end position="300"/>
    </location>
</feature>
<gene>
    <name type="primary">braD</name>
    <name type="ordered locus">PA1073</name>
</gene>